<comment type="function">
    <text evidence="1">Part of the twin-arginine translocation (Tat) system that transports large folded proteins containing a characteristic twin-arginine motif in their signal peptide across membranes. TatA could form the protein-conducting channel of the Tat system.</text>
</comment>
<comment type="subunit">
    <text evidence="1">The Tat system comprises two distinct complexes: a TatABC complex, containing multiple copies of TatA, TatB and TatC subunits, and a separate TatA complex, containing only TatA subunits. Substrates initially bind to the TatABC complex, which probably triggers association of the separate TatA complex to form the active translocon.</text>
</comment>
<comment type="subcellular location">
    <subcellularLocation>
        <location evidence="1">Cell membrane</location>
        <topology evidence="1">Single-pass membrane protein</topology>
    </subcellularLocation>
</comment>
<comment type="similarity">
    <text evidence="1">Belongs to the TatA/E family.</text>
</comment>
<dbReference type="EMBL" id="CP000480">
    <property type="protein sequence ID" value="ABK74326.1"/>
    <property type="molecule type" value="Genomic_DNA"/>
</dbReference>
<dbReference type="EMBL" id="CP001663">
    <property type="protein sequence ID" value="AFP40255.1"/>
    <property type="molecule type" value="Genomic_DNA"/>
</dbReference>
<dbReference type="RefSeq" id="WP_003895338.1">
    <property type="nucleotide sequence ID" value="NZ_SIJM01000005.1"/>
</dbReference>
<dbReference type="RefSeq" id="YP_888178.1">
    <property type="nucleotide sequence ID" value="NC_008596.1"/>
</dbReference>
<dbReference type="SMR" id="A0QZ40"/>
<dbReference type="STRING" id="246196.MSMEG_3887"/>
<dbReference type="PaxDb" id="246196-MSMEI_3797"/>
<dbReference type="GeneID" id="93458626"/>
<dbReference type="KEGG" id="msb:LJ00_19310"/>
<dbReference type="KEGG" id="msg:MSMEI_3797"/>
<dbReference type="KEGG" id="msm:MSMEG_3887"/>
<dbReference type="PATRIC" id="fig|246196.19.peg.3826"/>
<dbReference type="eggNOG" id="COG1826">
    <property type="taxonomic scope" value="Bacteria"/>
</dbReference>
<dbReference type="OrthoDB" id="5245163at2"/>
<dbReference type="Proteomes" id="UP000000757">
    <property type="component" value="Chromosome"/>
</dbReference>
<dbReference type="Proteomes" id="UP000006158">
    <property type="component" value="Chromosome"/>
</dbReference>
<dbReference type="GO" id="GO:0033281">
    <property type="term" value="C:TAT protein transport complex"/>
    <property type="evidence" value="ECO:0007669"/>
    <property type="project" value="UniProtKB-UniRule"/>
</dbReference>
<dbReference type="GO" id="GO:0008320">
    <property type="term" value="F:protein transmembrane transporter activity"/>
    <property type="evidence" value="ECO:0007669"/>
    <property type="project" value="UniProtKB-UniRule"/>
</dbReference>
<dbReference type="GO" id="GO:0043953">
    <property type="term" value="P:protein transport by the Tat complex"/>
    <property type="evidence" value="ECO:0007669"/>
    <property type="project" value="UniProtKB-UniRule"/>
</dbReference>
<dbReference type="Gene3D" id="1.20.5.3310">
    <property type="match status" value="1"/>
</dbReference>
<dbReference type="HAMAP" id="MF_00236">
    <property type="entry name" value="TatA_E"/>
    <property type="match status" value="1"/>
</dbReference>
<dbReference type="InterPro" id="IPR003369">
    <property type="entry name" value="TatA/B/E"/>
</dbReference>
<dbReference type="InterPro" id="IPR006312">
    <property type="entry name" value="TatA/E"/>
</dbReference>
<dbReference type="NCBIfam" id="NF001854">
    <property type="entry name" value="PRK00575.1"/>
    <property type="match status" value="1"/>
</dbReference>
<dbReference type="NCBIfam" id="TIGR01411">
    <property type="entry name" value="tatAE"/>
    <property type="match status" value="1"/>
</dbReference>
<dbReference type="PANTHER" id="PTHR42982">
    <property type="entry name" value="SEC-INDEPENDENT PROTEIN TRANSLOCASE PROTEIN TATA"/>
    <property type="match status" value="1"/>
</dbReference>
<dbReference type="PANTHER" id="PTHR42982:SF8">
    <property type="entry name" value="SEC-INDEPENDENT PROTEIN TRANSLOCASE PROTEIN TATA"/>
    <property type="match status" value="1"/>
</dbReference>
<dbReference type="Pfam" id="PF02416">
    <property type="entry name" value="TatA_B_E"/>
    <property type="match status" value="1"/>
</dbReference>
<feature type="chain" id="PRO_1000044401" description="Sec-independent protein translocase protein TatA">
    <location>
        <begin position="1"/>
        <end position="81"/>
    </location>
</feature>
<feature type="transmembrane region" description="Helical" evidence="1">
    <location>
        <begin position="1"/>
        <end position="21"/>
    </location>
</feature>
<feature type="region of interest" description="Disordered" evidence="2">
    <location>
        <begin position="46"/>
        <end position="81"/>
    </location>
</feature>
<feature type="compositionally biased region" description="Basic and acidic residues" evidence="2">
    <location>
        <begin position="46"/>
        <end position="56"/>
    </location>
</feature>
<evidence type="ECO:0000255" key="1">
    <source>
        <dbReference type="HAMAP-Rule" id="MF_00236"/>
    </source>
</evidence>
<evidence type="ECO:0000256" key="2">
    <source>
        <dbReference type="SAM" id="MobiDB-lite"/>
    </source>
</evidence>
<accession>A0QZ40</accession>
<accession>I7FFP4</accession>
<proteinExistence type="inferred from homology"/>
<reference key="1">
    <citation type="submission" date="2006-10" db="EMBL/GenBank/DDBJ databases">
        <authorList>
            <person name="Fleischmann R.D."/>
            <person name="Dodson R.J."/>
            <person name="Haft D.H."/>
            <person name="Merkel J.S."/>
            <person name="Nelson W.C."/>
            <person name="Fraser C.M."/>
        </authorList>
    </citation>
    <scope>NUCLEOTIDE SEQUENCE [LARGE SCALE GENOMIC DNA]</scope>
    <source>
        <strain>ATCC 700084 / mc(2)155</strain>
    </source>
</reference>
<reference key="2">
    <citation type="journal article" date="2007" name="Genome Biol.">
        <title>Interrupted coding sequences in Mycobacterium smegmatis: authentic mutations or sequencing errors?</title>
        <authorList>
            <person name="Deshayes C."/>
            <person name="Perrodou E."/>
            <person name="Gallien S."/>
            <person name="Euphrasie D."/>
            <person name="Schaeffer C."/>
            <person name="Van-Dorsselaer A."/>
            <person name="Poch O."/>
            <person name="Lecompte O."/>
            <person name="Reyrat J.-M."/>
        </authorList>
    </citation>
    <scope>NUCLEOTIDE SEQUENCE [LARGE SCALE GENOMIC DNA]</scope>
    <source>
        <strain>ATCC 700084 / mc(2)155</strain>
    </source>
</reference>
<reference key="3">
    <citation type="journal article" date="2009" name="Genome Res.">
        <title>Ortho-proteogenomics: multiple proteomes investigation through orthology and a new MS-based protocol.</title>
        <authorList>
            <person name="Gallien S."/>
            <person name="Perrodou E."/>
            <person name="Carapito C."/>
            <person name="Deshayes C."/>
            <person name="Reyrat J.-M."/>
            <person name="Van Dorsselaer A."/>
            <person name="Poch O."/>
            <person name="Schaeffer C."/>
            <person name="Lecompte O."/>
        </authorList>
    </citation>
    <scope>NUCLEOTIDE SEQUENCE [LARGE SCALE GENOMIC DNA]</scope>
    <source>
        <strain>ATCC 700084 / mc(2)155</strain>
    </source>
</reference>
<protein>
    <recommendedName>
        <fullName evidence="1">Sec-independent protein translocase protein TatA</fullName>
    </recommendedName>
</protein>
<sequence>MGGLQPWHWVIVIAVFVLLFGAKKLPDAARSLGKSMRIFKSEIKEMQAESKGDEPKPATPIASERVDTTAPEQQSTDRHTA</sequence>
<organism>
    <name type="scientific">Mycolicibacterium smegmatis (strain ATCC 700084 / mc(2)155)</name>
    <name type="common">Mycobacterium smegmatis</name>
    <dbReference type="NCBI Taxonomy" id="246196"/>
    <lineage>
        <taxon>Bacteria</taxon>
        <taxon>Bacillati</taxon>
        <taxon>Actinomycetota</taxon>
        <taxon>Actinomycetes</taxon>
        <taxon>Mycobacteriales</taxon>
        <taxon>Mycobacteriaceae</taxon>
        <taxon>Mycolicibacterium</taxon>
    </lineage>
</organism>
<keyword id="KW-1003">Cell membrane</keyword>
<keyword id="KW-0472">Membrane</keyword>
<keyword id="KW-0653">Protein transport</keyword>
<keyword id="KW-1185">Reference proteome</keyword>
<keyword id="KW-0811">Translocation</keyword>
<keyword id="KW-0812">Transmembrane</keyword>
<keyword id="KW-1133">Transmembrane helix</keyword>
<keyword id="KW-0813">Transport</keyword>
<gene>
    <name evidence="1" type="primary">tatA</name>
    <name type="ordered locus">MSMEG_3887</name>
    <name type="ordered locus">MSMEI_3797</name>
</gene>
<name>TATA_MYCS2</name>